<feature type="chain" id="PRO_0000367673" description="Glutamate--tRNA ligase 2">
    <location>
        <begin position="1"/>
        <end position="467"/>
    </location>
</feature>
<feature type="short sequence motif" description="'HIGH' region" evidence="1">
    <location>
        <begin position="18"/>
        <end position="28"/>
    </location>
</feature>
<feature type="short sequence motif" description="'KMSKS' region" evidence="1">
    <location>
        <begin position="238"/>
        <end position="242"/>
    </location>
</feature>
<feature type="binding site" evidence="1">
    <location>
        <position position="241"/>
    </location>
    <ligand>
        <name>ATP</name>
        <dbReference type="ChEBI" id="CHEBI:30616"/>
    </ligand>
</feature>
<reference key="1">
    <citation type="submission" date="2007-07" db="EMBL/GenBank/DDBJ databases">
        <title>Complete sequence of Fervidobacterium nodosum Rt17-B1.</title>
        <authorList>
            <consortium name="US DOE Joint Genome Institute"/>
            <person name="Copeland A."/>
            <person name="Lucas S."/>
            <person name="Lapidus A."/>
            <person name="Barry K."/>
            <person name="Glavina del Rio T."/>
            <person name="Dalin E."/>
            <person name="Tice H."/>
            <person name="Pitluck S."/>
            <person name="Saunders E."/>
            <person name="Brettin T."/>
            <person name="Bruce D."/>
            <person name="Detter J.C."/>
            <person name="Han C."/>
            <person name="Schmutz J."/>
            <person name="Larimer F."/>
            <person name="Land M."/>
            <person name="Hauser L."/>
            <person name="Kyrpides N."/>
            <person name="Mikhailova N."/>
            <person name="Nelson K."/>
            <person name="Gogarten J.P."/>
            <person name="Noll K."/>
            <person name="Richardson P."/>
        </authorList>
    </citation>
    <scope>NUCLEOTIDE SEQUENCE [LARGE SCALE GENOMIC DNA]</scope>
    <source>
        <strain>ATCC 35602 / DSM 5306 / Rt17-B1</strain>
    </source>
</reference>
<gene>
    <name evidence="1" type="primary">gltX2</name>
    <name type="ordered locus">Fnod_0777</name>
</gene>
<sequence>MSQEINQKSQEVRVRFAPSPTGYLHVGGARTALFNWLFARKNNGKFVLRIEDTDTERSTRESEQMIMNDLKWLGLYWDEGPDIGGNYGPYRQSERLEIYKKYAYELVEKGYAYFAIYDENDPKKVIEKTTKEPKTKNPFTVVFKVPENKVIAFDDMLKGRIEFSTEHMEDFIILKSNGYSVYNYAVVIDDHFMNITHVLRGEDHISNTPKQLLLYEAFGWEQPKFMHIPLILGADKTPLSKRHGATAVEHFRKEGYLPKALVNYLAILGWSVDEEIFDYTQKVQSFMPEQISNKNVVFDYQKLEWVNGKHMRTLSLDELMKYFKEWQEFTEKKFEIPEKVIEISREKVNTLKQLYEFTLPFVDDNYEYSNDYIEKFLKKPEAIHILELGMKKFSDLNDYTIENVEKVLREIAIELNLGTNKVFQTIRGAVLGRLVTPGLFESIAVLGKEKTLSRIRRTIGMISTIGG</sequence>
<accession>A7HL47</accession>
<name>SYE2_FERNB</name>
<comment type="function">
    <text evidence="1">Catalyzes the attachment of glutamate to tRNA(Glu) in a two-step reaction: glutamate is first activated by ATP to form Glu-AMP and then transferred to the acceptor end of tRNA(Glu).</text>
</comment>
<comment type="catalytic activity">
    <reaction evidence="1">
        <text>tRNA(Glu) + L-glutamate + ATP = L-glutamyl-tRNA(Glu) + AMP + diphosphate</text>
        <dbReference type="Rhea" id="RHEA:23540"/>
        <dbReference type="Rhea" id="RHEA-COMP:9663"/>
        <dbReference type="Rhea" id="RHEA-COMP:9680"/>
        <dbReference type="ChEBI" id="CHEBI:29985"/>
        <dbReference type="ChEBI" id="CHEBI:30616"/>
        <dbReference type="ChEBI" id="CHEBI:33019"/>
        <dbReference type="ChEBI" id="CHEBI:78442"/>
        <dbReference type="ChEBI" id="CHEBI:78520"/>
        <dbReference type="ChEBI" id="CHEBI:456215"/>
        <dbReference type="EC" id="6.1.1.17"/>
    </reaction>
</comment>
<comment type="subunit">
    <text evidence="1">Monomer.</text>
</comment>
<comment type="subcellular location">
    <subcellularLocation>
        <location evidence="1">Cytoplasm</location>
    </subcellularLocation>
</comment>
<comment type="similarity">
    <text evidence="1">Belongs to the class-I aminoacyl-tRNA synthetase family. Glutamate--tRNA ligase type 1 subfamily.</text>
</comment>
<organism>
    <name type="scientific">Fervidobacterium nodosum (strain ATCC 35602 / DSM 5306 / Rt17-B1)</name>
    <dbReference type="NCBI Taxonomy" id="381764"/>
    <lineage>
        <taxon>Bacteria</taxon>
        <taxon>Thermotogati</taxon>
        <taxon>Thermotogota</taxon>
        <taxon>Thermotogae</taxon>
        <taxon>Thermotogales</taxon>
        <taxon>Fervidobacteriaceae</taxon>
        <taxon>Fervidobacterium</taxon>
    </lineage>
</organism>
<proteinExistence type="inferred from homology"/>
<dbReference type="EC" id="6.1.1.17" evidence="1"/>
<dbReference type="EMBL" id="CP000771">
    <property type="protein sequence ID" value="ABS60630.1"/>
    <property type="molecule type" value="Genomic_DNA"/>
</dbReference>
<dbReference type="RefSeq" id="WP_011993947.1">
    <property type="nucleotide sequence ID" value="NC_009718.1"/>
</dbReference>
<dbReference type="SMR" id="A7HL47"/>
<dbReference type="STRING" id="381764.Fnod_0777"/>
<dbReference type="KEGG" id="fno:Fnod_0777"/>
<dbReference type="eggNOG" id="COG0008">
    <property type="taxonomic scope" value="Bacteria"/>
</dbReference>
<dbReference type="HOGENOM" id="CLU_015768_6_3_0"/>
<dbReference type="OrthoDB" id="9807503at2"/>
<dbReference type="Proteomes" id="UP000002415">
    <property type="component" value="Chromosome"/>
</dbReference>
<dbReference type="GO" id="GO:0005829">
    <property type="term" value="C:cytosol"/>
    <property type="evidence" value="ECO:0007669"/>
    <property type="project" value="TreeGrafter"/>
</dbReference>
<dbReference type="GO" id="GO:0005524">
    <property type="term" value="F:ATP binding"/>
    <property type="evidence" value="ECO:0007669"/>
    <property type="project" value="UniProtKB-UniRule"/>
</dbReference>
<dbReference type="GO" id="GO:0004818">
    <property type="term" value="F:glutamate-tRNA ligase activity"/>
    <property type="evidence" value="ECO:0007669"/>
    <property type="project" value="UniProtKB-UniRule"/>
</dbReference>
<dbReference type="GO" id="GO:0000049">
    <property type="term" value="F:tRNA binding"/>
    <property type="evidence" value="ECO:0007669"/>
    <property type="project" value="InterPro"/>
</dbReference>
<dbReference type="GO" id="GO:0008270">
    <property type="term" value="F:zinc ion binding"/>
    <property type="evidence" value="ECO:0007669"/>
    <property type="project" value="InterPro"/>
</dbReference>
<dbReference type="GO" id="GO:0006424">
    <property type="term" value="P:glutamyl-tRNA aminoacylation"/>
    <property type="evidence" value="ECO:0007669"/>
    <property type="project" value="UniProtKB-UniRule"/>
</dbReference>
<dbReference type="CDD" id="cd00808">
    <property type="entry name" value="GluRS_core"/>
    <property type="match status" value="1"/>
</dbReference>
<dbReference type="Gene3D" id="1.10.10.350">
    <property type="match status" value="1"/>
</dbReference>
<dbReference type="Gene3D" id="1.10.8.70">
    <property type="entry name" value="Glutamate-tRNA synthetase, class I, anticodon-binding domain 1"/>
    <property type="match status" value="1"/>
</dbReference>
<dbReference type="Gene3D" id="1.10.1160.10">
    <property type="entry name" value="Glutamyl-trna Synthetase, Domain 2"/>
    <property type="match status" value="1"/>
</dbReference>
<dbReference type="Gene3D" id="3.90.800.10">
    <property type="entry name" value="Glutamyl-tRNA Synthetase, Domain 3"/>
    <property type="match status" value="1"/>
</dbReference>
<dbReference type="Gene3D" id="3.40.50.620">
    <property type="entry name" value="HUPs"/>
    <property type="match status" value="1"/>
</dbReference>
<dbReference type="HAMAP" id="MF_00022">
    <property type="entry name" value="Glu_tRNA_synth_type1"/>
    <property type="match status" value="1"/>
</dbReference>
<dbReference type="InterPro" id="IPR045462">
    <property type="entry name" value="aa-tRNA-synth_I_cd-bd"/>
</dbReference>
<dbReference type="InterPro" id="IPR020751">
    <property type="entry name" value="aa-tRNA-synth_I_codon-bd_sub2"/>
</dbReference>
<dbReference type="InterPro" id="IPR001412">
    <property type="entry name" value="aa-tRNA-synth_I_CS"/>
</dbReference>
<dbReference type="InterPro" id="IPR008925">
    <property type="entry name" value="aa_tRNA-synth_I_cd-bd_sf"/>
</dbReference>
<dbReference type="InterPro" id="IPR004527">
    <property type="entry name" value="Glu-tRNA-ligase_bac/mito"/>
</dbReference>
<dbReference type="InterPro" id="IPR020752">
    <property type="entry name" value="Glu-tRNA-synth_I_codon-bd_sub1"/>
</dbReference>
<dbReference type="InterPro" id="IPR000924">
    <property type="entry name" value="Glu/Gln-tRNA-synth"/>
</dbReference>
<dbReference type="InterPro" id="IPR020058">
    <property type="entry name" value="Glu/Gln-tRNA-synth_Ib_cat-dom"/>
</dbReference>
<dbReference type="InterPro" id="IPR020061">
    <property type="entry name" value="Glu_tRNA_lig_a-bdl"/>
</dbReference>
<dbReference type="InterPro" id="IPR049940">
    <property type="entry name" value="GluQ/Sye"/>
</dbReference>
<dbReference type="InterPro" id="IPR033910">
    <property type="entry name" value="GluRS_core"/>
</dbReference>
<dbReference type="InterPro" id="IPR014729">
    <property type="entry name" value="Rossmann-like_a/b/a_fold"/>
</dbReference>
<dbReference type="NCBIfam" id="TIGR00464">
    <property type="entry name" value="gltX_bact"/>
    <property type="match status" value="1"/>
</dbReference>
<dbReference type="PANTHER" id="PTHR43311">
    <property type="entry name" value="GLUTAMATE--TRNA LIGASE"/>
    <property type="match status" value="1"/>
</dbReference>
<dbReference type="PANTHER" id="PTHR43311:SF2">
    <property type="entry name" value="GLUTAMATE--TRNA LIGASE, MITOCHONDRIAL-RELATED"/>
    <property type="match status" value="1"/>
</dbReference>
<dbReference type="Pfam" id="PF19269">
    <property type="entry name" value="Anticodon_2"/>
    <property type="match status" value="1"/>
</dbReference>
<dbReference type="Pfam" id="PF00749">
    <property type="entry name" value="tRNA-synt_1c"/>
    <property type="match status" value="2"/>
</dbReference>
<dbReference type="PRINTS" id="PR00987">
    <property type="entry name" value="TRNASYNTHGLU"/>
</dbReference>
<dbReference type="SUPFAM" id="SSF48163">
    <property type="entry name" value="An anticodon-binding domain of class I aminoacyl-tRNA synthetases"/>
    <property type="match status" value="1"/>
</dbReference>
<dbReference type="SUPFAM" id="SSF52374">
    <property type="entry name" value="Nucleotidylyl transferase"/>
    <property type="match status" value="1"/>
</dbReference>
<dbReference type="PROSITE" id="PS00178">
    <property type="entry name" value="AA_TRNA_LIGASE_I"/>
    <property type="match status" value="1"/>
</dbReference>
<protein>
    <recommendedName>
        <fullName evidence="1">Glutamate--tRNA ligase 2</fullName>
        <ecNumber evidence="1">6.1.1.17</ecNumber>
    </recommendedName>
    <alternativeName>
        <fullName evidence="1">Glutamyl-tRNA synthetase 2</fullName>
        <shortName evidence="1">GluRS 2</shortName>
    </alternativeName>
</protein>
<keyword id="KW-0030">Aminoacyl-tRNA synthetase</keyword>
<keyword id="KW-0067">ATP-binding</keyword>
<keyword id="KW-0963">Cytoplasm</keyword>
<keyword id="KW-0436">Ligase</keyword>
<keyword id="KW-0547">Nucleotide-binding</keyword>
<keyword id="KW-0648">Protein biosynthesis</keyword>
<keyword id="KW-1185">Reference proteome</keyword>
<evidence type="ECO:0000255" key="1">
    <source>
        <dbReference type="HAMAP-Rule" id="MF_00022"/>
    </source>
</evidence>